<proteinExistence type="inferred from homology"/>
<name>GPDA_RICB8</name>
<accession>A8GUW7</accession>
<protein>
    <recommendedName>
        <fullName evidence="1">Glycerol-3-phosphate dehydrogenase [NAD(P)+]</fullName>
        <ecNumber evidence="1">1.1.1.94</ecNumber>
    </recommendedName>
    <alternativeName>
        <fullName evidence="1">NAD(P)(+)-dependent glycerol-3-phosphate dehydrogenase</fullName>
    </alternativeName>
    <alternativeName>
        <fullName evidence="1">NAD(P)H-dependent dihydroxyacetone-phosphate reductase</fullName>
    </alternativeName>
</protein>
<feature type="chain" id="PRO_1000049543" description="Glycerol-3-phosphate dehydrogenase [NAD(P)+]">
    <location>
        <begin position="1"/>
        <end position="314"/>
    </location>
</feature>
<feature type="active site" description="Proton acceptor" evidence="1">
    <location>
        <position position="191"/>
    </location>
</feature>
<feature type="binding site" evidence="1">
    <location>
        <position position="14"/>
    </location>
    <ligand>
        <name>NADPH</name>
        <dbReference type="ChEBI" id="CHEBI:57783"/>
    </ligand>
</feature>
<feature type="binding site" evidence="1">
    <location>
        <position position="15"/>
    </location>
    <ligand>
        <name>NADPH</name>
        <dbReference type="ChEBI" id="CHEBI:57783"/>
    </ligand>
</feature>
<feature type="binding site" evidence="1">
    <location>
        <position position="35"/>
    </location>
    <ligand>
        <name>NADPH</name>
        <dbReference type="ChEBI" id="CHEBI:57783"/>
    </ligand>
</feature>
<feature type="binding site" evidence="1">
    <location>
        <position position="108"/>
    </location>
    <ligand>
        <name>NADPH</name>
        <dbReference type="ChEBI" id="CHEBI:57783"/>
    </ligand>
</feature>
<feature type="binding site" evidence="1">
    <location>
        <position position="108"/>
    </location>
    <ligand>
        <name>sn-glycerol 3-phosphate</name>
        <dbReference type="ChEBI" id="CHEBI:57597"/>
    </ligand>
</feature>
<feature type="binding site" evidence="1">
    <location>
        <position position="136"/>
    </location>
    <ligand>
        <name>sn-glycerol 3-phosphate</name>
        <dbReference type="ChEBI" id="CHEBI:57597"/>
    </ligand>
</feature>
<feature type="binding site" evidence="1">
    <location>
        <position position="140"/>
    </location>
    <ligand>
        <name>NADPH</name>
        <dbReference type="ChEBI" id="CHEBI:57783"/>
    </ligand>
</feature>
<feature type="binding site" evidence="1">
    <location>
        <position position="191"/>
    </location>
    <ligand>
        <name>sn-glycerol 3-phosphate</name>
        <dbReference type="ChEBI" id="CHEBI:57597"/>
    </ligand>
</feature>
<feature type="binding site" evidence="1">
    <location>
        <position position="247"/>
    </location>
    <ligand>
        <name>sn-glycerol 3-phosphate</name>
        <dbReference type="ChEBI" id="CHEBI:57597"/>
    </ligand>
</feature>
<feature type="binding site" evidence="1">
    <location>
        <position position="257"/>
    </location>
    <ligand>
        <name>sn-glycerol 3-phosphate</name>
        <dbReference type="ChEBI" id="CHEBI:57597"/>
    </ligand>
</feature>
<feature type="binding site" evidence="1">
    <location>
        <position position="258"/>
    </location>
    <ligand>
        <name>NADPH</name>
        <dbReference type="ChEBI" id="CHEBI:57783"/>
    </ligand>
</feature>
<feature type="binding site" evidence="1">
    <location>
        <position position="258"/>
    </location>
    <ligand>
        <name>sn-glycerol 3-phosphate</name>
        <dbReference type="ChEBI" id="CHEBI:57597"/>
    </ligand>
</feature>
<feature type="binding site" evidence="1">
    <location>
        <position position="259"/>
    </location>
    <ligand>
        <name>sn-glycerol 3-phosphate</name>
        <dbReference type="ChEBI" id="CHEBI:57597"/>
    </ligand>
</feature>
<feature type="binding site" evidence="1">
    <location>
        <position position="282"/>
    </location>
    <ligand>
        <name>NADPH</name>
        <dbReference type="ChEBI" id="CHEBI:57783"/>
    </ligand>
</feature>
<feature type="binding site" evidence="1">
    <location>
        <position position="284"/>
    </location>
    <ligand>
        <name>NADPH</name>
        <dbReference type="ChEBI" id="CHEBI:57783"/>
    </ligand>
</feature>
<comment type="function">
    <text evidence="1">Catalyzes the reduction of the glycolytic intermediate dihydroxyacetone phosphate (DHAP) to sn-glycerol 3-phosphate (G3P), the key precursor for phospholipid synthesis.</text>
</comment>
<comment type="catalytic activity">
    <reaction evidence="1">
        <text>sn-glycerol 3-phosphate + NAD(+) = dihydroxyacetone phosphate + NADH + H(+)</text>
        <dbReference type="Rhea" id="RHEA:11092"/>
        <dbReference type="ChEBI" id="CHEBI:15378"/>
        <dbReference type="ChEBI" id="CHEBI:57540"/>
        <dbReference type="ChEBI" id="CHEBI:57597"/>
        <dbReference type="ChEBI" id="CHEBI:57642"/>
        <dbReference type="ChEBI" id="CHEBI:57945"/>
        <dbReference type="EC" id="1.1.1.94"/>
    </reaction>
    <physiologicalReaction direction="right-to-left" evidence="1">
        <dbReference type="Rhea" id="RHEA:11094"/>
    </physiologicalReaction>
</comment>
<comment type="catalytic activity">
    <reaction evidence="1">
        <text>sn-glycerol 3-phosphate + NADP(+) = dihydroxyacetone phosphate + NADPH + H(+)</text>
        <dbReference type="Rhea" id="RHEA:11096"/>
        <dbReference type="ChEBI" id="CHEBI:15378"/>
        <dbReference type="ChEBI" id="CHEBI:57597"/>
        <dbReference type="ChEBI" id="CHEBI:57642"/>
        <dbReference type="ChEBI" id="CHEBI:57783"/>
        <dbReference type="ChEBI" id="CHEBI:58349"/>
        <dbReference type="EC" id="1.1.1.94"/>
    </reaction>
    <physiologicalReaction direction="right-to-left" evidence="1">
        <dbReference type="Rhea" id="RHEA:11098"/>
    </physiologicalReaction>
</comment>
<comment type="pathway">
    <text evidence="1">Membrane lipid metabolism; glycerophospholipid metabolism.</text>
</comment>
<comment type="subcellular location">
    <subcellularLocation>
        <location evidence="1">Cytoplasm</location>
    </subcellularLocation>
</comment>
<comment type="similarity">
    <text evidence="1">Belongs to the NAD-dependent glycerol-3-phosphate dehydrogenase family.</text>
</comment>
<organism>
    <name type="scientific">Rickettsia bellii (strain OSU 85-389)</name>
    <dbReference type="NCBI Taxonomy" id="391896"/>
    <lineage>
        <taxon>Bacteria</taxon>
        <taxon>Pseudomonadati</taxon>
        <taxon>Pseudomonadota</taxon>
        <taxon>Alphaproteobacteria</taxon>
        <taxon>Rickettsiales</taxon>
        <taxon>Rickettsiaceae</taxon>
        <taxon>Rickettsieae</taxon>
        <taxon>Rickettsia</taxon>
        <taxon>belli group</taxon>
    </lineage>
</organism>
<reference key="1">
    <citation type="submission" date="2007-09" db="EMBL/GenBank/DDBJ databases">
        <title>Complete genome sequencing of Rickettsia bellii.</title>
        <authorList>
            <person name="Madan A."/>
            <person name="Lee H."/>
            <person name="Madan A."/>
            <person name="Yoon J.-G."/>
            <person name="Ryu G.-Y."/>
            <person name="Dasch G."/>
            <person name="Ereemeva M."/>
        </authorList>
    </citation>
    <scope>NUCLEOTIDE SEQUENCE [LARGE SCALE GENOMIC DNA]</scope>
    <source>
        <strain>OSU 85-389</strain>
    </source>
</reference>
<sequence length="314" mass="34243">MKRFKNIAVYGGGSFGTSLAAIAARVCENVTLFLRDEEIAKEITDKKTNTKYLGNIKLPSNLQATTNLDKIKDFELIIIAVPSYAFDEAIKLLKTHISNDNILLIATKGFARNPTELFSDRLKTLLSNNPIAFLSGPNLAKDLAKGLPASATIASLDIDLANKISYNLSSEAFVASTINDVITLQVAGALKNIFAIKSGIDMAKEQGENAKATLIVSALKEIAILSKALGGMKNNMDILLEAGVVGDLVLTCYSRSSRNTKFGYEFGISKDKQKFLQEYKELVEGREAIKLVLELIERYDLDMPIVSSLGNVIR</sequence>
<dbReference type="EC" id="1.1.1.94" evidence="1"/>
<dbReference type="EMBL" id="CP000849">
    <property type="protein sequence ID" value="ABV78634.1"/>
    <property type="molecule type" value="Genomic_DNA"/>
</dbReference>
<dbReference type="RefSeq" id="WP_011477882.1">
    <property type="nucleotide sequence ID" value="NC_009883.1"/>
</dbReference>
<dbReference type="SMR" id="A8GUW7"/>
<dbReference type="KEGG" id="rbo:A1I_01190"/>
<dbReference type="HOGENOM" id="CLU_033449_0_0_5"/>
<dbReference type="UniPathway" id="UPA00940"/>
<dbReference type="GO" id="GO:0005829">
    <property type="term" value="C:cytosol"/>
    <property type="evidence" value="ECO:0007669"/>
    <property type="project" value="TreeGrafter"/>
</dbReference>
<dbReference type="GO" id="GO:0047952">
    <property type="term" value="F:glycerol-3-phosphate dehydrogenase [NAD(P)+] activity"/>
    <property type="evidence" value="ECO:0007669"/>
    <property type="project" value="UniProtKB-UniRule"/>
</dbReference>
<dbReference type="GO" id="GO:0051287">
    <property type="term" value="F:NAD binding"/>
    <property type="evidence" value="ECO:0007669"/>
    <property type="project" value="InterPro"/>
</dbReference>
<dbReference type="GO" id="GO:0005975">
    <property type="term" value="P:carbohydrate metabolic process"/>
    <property type="evidence" value="ECO:0007669"/>
    <property type="project" value="InterPro"/>
</dbReference>
<dbReference type="GO" id="GO:0046167">
    <property type="term" value="P:glycerol-3-phosphate biosynthetic process"/>
    <property type="evidence" value="ECO:0007669"/>
    <property type="project" value="UniProtKB-UniRule"/>
</dbReference>
<dbReference type="GO" id="GO:0046168">
    <property type="term" value="P:glycerol-3-phosphate catabolic process"/>
    <property type="evidence" value="ECO:0007669"/>
    <property type="project" value="InterPro"/>
</dbReference>
<dbReference type="GO" id="GO:0006650">
    <property type="term" value="P:glycerophospholipid metabolic process"/>
    <property type="evidence" value="ECO:0007669"/>
    <property type="project" value="UniProtKB-UniRule"/>
</dbReference>
<dbReference type="GO" id="GO:0008654">
    <property type="term" value="P:phospholipid biosynthetic process"/>
    <property type="evidence" value="ECO:0007669"/>
    <property type="project" value="UniProtKB-KW"/>
</dbReference>
<dbReference type="Gene3D" id="1.10.1040.10">
    <property type="entry name" value="N-(1-d-carboxylethyl)-l-norvaline Dehydrogenase, domain 2"/>
    <property type="match status" value="1"/>
</dbReference>
<dbReference type="Gene3D" id="3.40.50.720">
    <property type="entry name" value="NAD(P)-binding Rossmann-like Domain"/>
    <property type="match status" value="1"/>
</dbReference>
<dbReference type="HAMAP" id="MF_00394">
    <property type="entry name" value="NAD_Glyc3P_dehydrog"/>
    <property type="match status" value="1"/>
</dbReference>
<dbReference type="InterPro" id="IPR008927">
    <property type="entry name" value="6-PGluconate_DH-like_C_sf"/>
</dbReference>
<dbReference type="InterPro" id="IPR013328">
    <property type="entry name" value="6PGD_dom2"/>
</dbReference>
<dbReference type="InterPro" id="IPR006168">
    <property type="entry name" value="G3P_DH_NAD-dep"/>
</dbReference>
<dbReference type="InterPro" id="IPR006109">
    <property type="entry name" value="G3P_DH_NAD-dep_C"/>
</dbReference>
<dbReference type="InterPro" id="IPR011128">
    <property type="entry name" value="G3P_DH_NAD-dep_N"/>
</dbReference>
<dbReference type="InterPro" id="IPR036291">
    <property type="entry name" value="NAD(P)-bd_dom_sf"/>
</dbReference>
<dbReference type="NCBIfam" id="NF000940">
    <property type="entry name" value="PRK00094.1-2"/>
    <property type="match status" value="1"/>
</dbReference>
<dbReference type="NCBIfam" id="NF000942">
    <property type="entry name" value="PRK00094.1-4"/>
    <property type="match status" value="1"/>
</dbReference>
<dbReference type="NCBIfam" id="NF000947">
    <property type="entry name" value="PRK00094.2-5"/>
    <property type="match status" value="1"/>
</dbReference>
<dbReference type="PANTHER" id="PTHR11728">
    <property type="entry name" value="GLYCEROL-3-PHOSPHATE DEHYDROGENASE"/>
    <property type="match status" value="1"/>
</dbReference>
<dbReference type="PANTHER" id="PTHR11728:SF1">
    <property type="entry name" value="GLYCEROL-3-PHOSPHATE DEHYDROGENASE [NAD(+)] 2, CHLOROPLASTIC"/>
    <property type="match status" value="1"/>
</dbReference>
<dbReference type="Pfam" id="PF07479">
    <property type="entry name" value="NAD_Gly3P_dh_C"/>
    <property type="match status" value="1"/>
</dbReference>
<dbReference type="Pfam" id="PF01210">
    <property type="entry name" value="NAD_Gly3P_dh_N"/>
    <property type="match status" value="1"/>
</dbReference>
<dbReference type="PIRSF" id="PIRSF000114">
    <property type="entry name" value="Glycerol-3-P_dh"/>
    <property type="match status" value="1"/>
</dbReference>
<dbReference type="PRINTS" id="PR00077">
    <property type="entry name" value="GPDHDRGNASE"/>
</dbReference>
<dbReference type="SUPFAM" id="SSF48179">
    <property type="entry name" value="6-phosphogluconate dehydrogenase C-terminal domain-like"/>
    <property type="match status" value="1"/>
</dbReference>
<dbReference type="SUPFAM" id="SSF51735">
    <property type="entry name" value="NAD(P)-binding Rossmann-fold domains"/>
    <property type="match status" value="1"/>
</dbReference>
<dbReference type="PROSITE" id="PS00957">
    <property type="entry name" value="NAD_G3PDH"/>
    <property type="match status" value="1"/>
</dbReference>
<keyword id="KW-0963">Cytoplasm</keyword>
<keyword id="KW-0444">Lipid biosynthesis</keyword>
<keyword id="KW-0443">Lipid metabolism</keyword>
<keyword id="KW-0520">NAD</keyword>
<keyword id="KW-0521">NADP</keyword>
<keyword id="KW-0547">Nucleotide-binding</keyword>
<keyword id="KW-0560">Oxidoreductase</keyword>
<keyword id="KW-0594">Phospholipid biosynthesis</keyword>
<keyword id="KW-1208">Phospholipid metabolism</keyword>
<gene>
    <name evidence="1" type="primary">gpsA</name>
    <name type="ordered locus">A1I_01190</name>
</gene>
<evidence type="ECO:0000255" key="1">
    <source>
        <dbReference type="HAMAP-Rule" id="MF_00394"/>
    </source>
</evidence>